<organism>
    <name type="scientific">Homo sapiens</name>
    <name type="common">Human</name>
    <dbReference type="NCBI Taxonomy" id="9606"/>
    <lineage>
        <taxon>Eukaryota</taxon>
        <taxon>Metazoa</taxon>
        <taxon>Chordata</taxon>
        <taxon>Craniata</taxon>
        <taxon>Vertebrata</taxon>
        <taxon>Euteleostomi</taxon>
        <taxon>Mammalia</taxon>
        <taxon>Eutheria</taxon>
        <taxon>Euarchontoglires</taxon>
        <taxon>Primates</taxon>
        <taxon>Haplorrhini</taxon>
        <taxon>Catarrhini</taxon>
        <taxon>Hominidae</taxon>
        <taxon>Homo</taxon>
    </lineage>
</organism>
<accession>Q6NUP7</accession>
<accession>Q9BUF8</accession>
<accession>Q9HCF0</accession>
<keyword id="KW-0025">Alternative splicing</keyword>
<keyword id="KW-0175">Coiled coil</keyword>
<keyword id="KW-0963">Cytoplasm</keyword>
<keyword id="KW-0597">Phosphoprotein</keyword>
<keyword id="KW-1267">Proteomics identification</keyword>
<keyword id="KW-1185">Reference proteome</keyword>
<keyword id="KW-0677">Repeat</keyword>
<protein>
    <recommendedName>
        <fullName>Serine/threonine-protein phosphatase 4 regulatory subunit 4</fullName>
    </recommendedName>
</protein>
<feature type="chain" id="PRO_0000311850" description="Serine/threonine-protein phosphatase 4 regulatory subunit 4">
    <location>
        <begin position="1"/>
        <end position="873"/>
    </location>
</feature>
<feature type="repeat" description="HEAT 1">
    <location>
        <begin position="213"/>
        <end position="251"/>
    </location>
</feature>
<feature type="repeat" description="HEAT 2">
    <location>
        <begin position="252"/>
        <end position="290"/>
    </location>
</feature>
<feature type="repeat" description="HEAT 3">
    <location>
        <begin position="392"/>
        <end position="427"/>
    </location>
</feature>
<feature type="region of interest" description="Disordered" evidence="3">
    <location>
        <begin position="713"/>
        <end position="766"/>
    </location>
</feature>
<feature type="region of interest" description="Disordered" evidence="3">
    <location>
        <begin position="822"/>
        <end position="873"/>
    </location>
</feature>
<feature type="coiled-coil region" evidence="2">
    <location>
        <begin position="686"/>
        <end position="720"/>
    </location>
</feature>
<feature type="compositionally biased region" description="Basic and acidic residues" evidence="3">
    <location>
        <begin position="713"/>
        <end position="737"/>
    </location>
</feature>
<feature type="compositionally biased region" description="Low complexity" evidence="3">
    <location>
        <begin position="747"/>
        <end position="762"/>
    </location>
</feature>
<feature type="compositionally biased region" description="Polar residues" evidence="3">
    <location>
        <begin position="822"/>
        <end position="858"/>
    </location>
</feature>
<feature type="compositionally biased region" description="Basic residues" evidence="3">
    <location>
        <begin position="864"/>
        <end position="873"/>
    </location>
</feature>
<feature type="modified residue" description="Phosphoserine" evidence="1">
    <location>
        <position position="775"/>
    </location>
</feature>
<feature type="modified residue" description="Phosphothreonine" evidence="1">
    <location>
        <position position="797"/>
    </location>
</feature>
<feature type="splice variant" id="VSP_029616" description="In isoform 2." evidence="5">
    <original>EALHVAGVEMQLTAAMSFLTIL</original>
    <variation>VHEDAHLFIQRVWISHMFVQRV</variation>
    <location>
        <begin position="99"/>
        <end position="120"/>
    </location>
</feature>
<feature type="splice variant" id="VSP_029617" description="In isoform 2." evidence="5">
    <location>
        <begin position="121"/>
        <end position="873"/>
    </location>
</feature>
<feature type="mutagenesis site" description="Abolishes interaction with PPP4C." evidence="4">
    <original>R</original>
    <variation>W</variation>
    <location>
        <position position="501"/>
    </location>
</feature>
<feature type="mutagenesis site" description="Diminishes interaction with PPP4C." evidence="4">
    <original>V</original>
    <variation>A</variation>
    <location>
        <position position="618"/>
    </location>
</feature>
<feature type="mutagenesis site" description="Abolishes interaction with PPP4C." evidence="4">
    <original>V</original>
    <variation>D</variation>
    <location>
        <position position="618"/>
    </location>
</feature>
<reference key="1">
    <citation type="journal article" date="2000" name="DNA Res.">
        <title>Prediction of the coding sequences of unidentified human genes. XVIII. The complete sequences of 100 new cDNA clones from brain which code for large proteins in vitro.</title>
        <authorList>
            <person name="Nagase T."/>
            <person name="Kikuno R."/>
            <person name="Nakayama M."/>
            <person name="Hirosawa M."/>
            <person name="Ohara O."/>
        </authorList>
    </citation>
    <scope>NUCLEOTIDE SEQUENCE [LARGE SCALE MRNA] (ISOFORM 1)</scope>
    <source>
        <tissue>Brain</tissue>
    </source>
</reference>
<reference key="2">
    <citation type="submission" date="2005-07" db="EMBL/GenBank/DDBJ databases">
        <authorList>
            <person name="Mural R.J."/>
            <person name="Istrail S."/>
            <person name="Sutton G.G."/>
            <person name="Florea L."/>
            <person name="Halpern A.L."/>
            <person name="Mobarry C.M."/>
            <person name="Lippert R."/>
            <person name="Walenz B."/>
            <person name="Shatkay H."/>
            <person name="Dew I."/>
            <person name="Miller J.R."/>
            <person name="Flanigan M.J."/>
            <person name="Edwards N.J."/>
            <person name="Bolanos R."/>
            <person name="Fasulo D."/>
            <person name="Halldorsson B.V."/>
            <person name="Hannenhalli S."/>
            <person name="Turner R."/>
            <person name="Yooseph S."/>
            <person name="Lu F."/>
            <person name="Nusskern D.R."/>
            <person name="Shue B.C."/>
            <person name="Zheng X.H."/>
            <person name="Zhong F."/>
            <person name="Delcher A.L."/>
            <person name="Huson D.H."/>
            <person name="Kravitz S.A."/>
            <person name="Mouchard L."/>
            <person name="Reinert K."/>
            <person name="Remington K.A."/>
            <person name="Clark A.G."/>
            <person name="Waterman M.S."/>
            <person name="Eichler E.E."/>
            <person name="Adams M.D."/>
            <person name="Hunkapiller M.W."/>
            <person name="Myers E.W."/>
            <person name="Venter J.C."/>
        </authorList>
    </citation>
    <scope>NUCLEOTIDE SEQUENCE [LARGE SCALE GENOMIC DNA]</scope>
</reference>
<reference key="3">
    <citation type="journal article" date="2004" name="Genome Res.">
        <title>The status, quality, and expansion of the NIH full-length cDNA project: the Mammalian Gene Collection (MGC).</title>
        <authorList>
            <consortium name="The MGC Project Team"/>
        </authorList>
    </citation>
    <scope>NUCLEOTIDE SEQUENCE [LARGE SCALE MRNA] (ISOFORMS 1 AND 2)</scope>
    <source>
        <tissue>Uterus</tissue>
    </source>
</reference>
<reference key="4">
    <citation type="journal article" date="2008" name="J. Biol. Chem.">
        <title>PP4R4/KIAA1622 forms a novel stable cytosolic complex with phosphoprotein phosphatase 4.</title>
        <authorList>
            <person name="Chen G.I."/>
            <person name="Tisayakorn S."/>
            <person name="Jorgensen C."/>
            <person name="D'Ambrosio L.M."/>
            <person name="Goudreault M."/>
            <person name="Gingras A.-C."/>
        </authorList>
    </citation>
    <scope>INTERACTION WITH PPP4C</scope>
    <scope>IDENTIFICATION IN THE PPP4C-PPP4R4 COMPLEX</scope>
    <scope>SUBCELLULAR LOCATION</scope>
    <scope>MUTAGENESIS OF ARG-501 AND VAL-618</scope>
</reference>
<sequence>MHPPPPAAAMDFSQNSLFGYMEDLQELTIIERPVRRSLKTPEEIERLTVDEDLSDIERAVYLLSAGQDVQGTSVIANLPFLMRQNPTETLRRVLPKVREALHVAGVEMQLTAAMSFLTILQDESVSIHAYTHSFLQVILLHLEHRDTGVSNAWLETLLSVIEVLPKETLRHEILNPLVSKAQLSQTVQSRLVSCKILGKLTNKFDAHTIKREILPLVKSLCQDVEYEVRSCMCRQLENIAQGIGTELTKSVVLPELIELSRDEGSSVRLAAFETLVNLLDIFDTDDRSQTILPLVKSFCEKSFKADESILISLSFHLGKLCHGLYGIFTPDQHLRFLEFYKKLCTLGLQQENGHNENQIPPQILEQEKKYISVRKNCAYNFPAMIVFVDPKNFHMELYSTFFCLCHDPEVPVRYTIAICFYEVSKLLNSGVYLIHKELITLLQDESLEVLDALIDHLPEILELMSTGGESSVQENKLSSLPDLIPALTAAEQRAAASLKWRTHEKLLQKYACLPHVISSDQIYYRFLQRMFTIMMTNNVLPVQKAASRTLCIFLRYNRKQEQRHEVIQKLIEQLGQGKSYWNRLRFLDTCEFIIEIFSKSFFCKYFFLPAIELTHDPVANVRMKLCYLLPKVKSTLKIPADKHLLQQLEMCVRKLLCQEKDKDVLAIVKRTVLELDRMEMSMDAFQKKFYEKDLLDQEKEREELLLLEMEQLEKEKQQNDGRPMSDKMFEKKRRDTKTPTQSLPKNIPISVPGPSSVTPSTSKEIKKSKLIRSQSFNNQAFHAKYGNLEKCASKSSTTGYTTSVSGLGKTSVLSLADDSFRTRNASSVPSSFSPNTPLPSTSRGTGNSVDPKSSGSKDTQPRKATLKSRKSNP</sequence>
<dbReference type="EMBL" id="AB046842">
    <property type="protein sequence ID" value="BAB13448.1"/>
    <property type="status" value="ALT_INIT"/>
    <property type="molecule type" value="mRNA"/>
</dbReference>
<dbReference type="EMBL" id="CH471061">
    <property type="protein sequence ID" value="EAW81561.1"/>
    <property type="molecule type" value="Genomic_DNA"/>
</dbReference>
<dbReference type="EMBL" id="CH471061">
    <property type="protein sequence ID" value="EAW81562.1"/>
    <property type="molecule type" value="Genomic_DNA"/>
</dbReference>
<dbReference type="EMBL" id="BC002650">
    <property type="protein sequence ID" value="AAH02650.2"/>
    <property type="molecule type" value="mRNA"/>
</dbReference>
<dbReference type="EMBL" id="BC068491">
    <property type="protein sequence ID" value="AAH68491.1"/>
    <property type="molecule type" value="mRNA"/>
</dbReference>
<dbReference type="CCDS" id="CCDS9921.1">
    <molecule id="Q6NUP7-1"/>
</dbReference>
<dbReference type="CCDS" id="CCDS9922.1">
    <molecule id="Q6NUP7-2"/>
</dbReference>
<dbReference type="RefSeq" id="NP_066009.2">
    <molecule id="Q6NUP7-2"/>
    <property type="nucleotide sequence ID" value="NM_020958.2"/>
</dbReference>
<dbReference type="RefSeq" id="NP_478144.1">
    <molecule id="Q6NUP7-1"/>
    <property type="nucleotide sequence ID" value="NM_058237.2"/>
</dbReference>
<dbReference type="SMR" id="Q6NUP7"/>
<dbReference type="BioGRID" id="121741">
    <property type="interactions" value="19"/>
</dbReference>
<dbReference type="ComplexPortal" id="CPX-1845">
    <property type="entry name" value="PPP4C-PPP4R4 protein phosphatase 4 complex"/>
</dbReference>
<dbReference type="CORUM" id="Q6NUP7"/>
<dbReference type="FunCoup" id="Q6NUP7">
    <property type="interactions" value="234"/>
</dbReference>
<dbReference type="IntAct" id="Q6NUP7">
    <property type="interactions" value="9"/>
</dbReference>
<dbReference type="MINT" id="Q6NUP7"/>
<dbReference type="STRING" id="9606.ENSP00000305924"/>
<dbReference type="GlyGen" id="Q6NUP7">
    <property type="glycosylation" value="2 sites, 1 O-linked glycan (1 site)"/>
</dbReference>
<dbReference type="iPTMnet" id="Q6NUP7"/>
<dbReference type="PhosphoSitePlus" id="Q6NUP7"/>
<dbReference type="BioMuta" id="PPP4R4"/>
<dbReference type="DMDM" id="74736832"/>
<dbReference type="jPOST" id="Q6NUP7"/>
<dbReference type="MassIVE" id="Q6NUP7"/>
<dbReference type="PaxDb" id="9606-ENSP00000305924"/>
<dbReference type="PeptideAtlas" id="Q6NUP7"/>
<dbReference type="ProteomicsDB" id="66699">
    <molecule id="Q6NUP7-1"/>
</dbReference>
<dbReference type="ProteomicsDB" id="66700">
    <molecule id="Q6NUP7-2"/>
</dbReference>
<dbReference type="Antibodypedia" id="49053">
    <property type="antibodies" value="52 antibodies from 18 providers"/>
</dbReference>
<dbReference type="DNASU" id="57718"/>
<dbReference type="Ensembl" id="ENST00000304338.8">
    <molecule id="Q6NUP7-1"/>
    <property type="protein sequence ID" value="ENSP00000305924.3"/>
    <property type="gene ID" value="ENSG00000119698.12"/>
</dbReference>
<dbReference type="Ensembl" id="ENST00000328839.3">
    <molecule id="Q6NUP7-2"/>
    <property type="protein sequence ID" value="ENSP00000330831.3"/>
    <property type="gene ID" value="ENSG00000119698.12"/>
</dbReference>
<dbReference type="Ensembl" id="ENST00000614957.2">
    <molecule id="Q6NUP7-2"/>
    <property type="protein sequence ID" value="ENSP00000482849.1"/>
    <property type="gene ID" value="ENSG00000278326.4"/>
</dbReference>
<dbReference type="Ensembl" id="ENST00000619905.4">
    <molecule id="Q6NUP7-1"/>
    <property type="protein sequence ID" value="ENSP00000480902.1"/>
    <property type="gene ID" value="ENSG00000278326.4"/>
</dbReference>
<dbReference type="GeneID" id="57718"/>
<dbReference type="KEGG" id="hsa:57718"/>
<dbReference type="MANE-Select" id="ENST00000304338.8">
    <property type="protein sequence ID" value="ENSP00000305924.3"/>
    <property type="RefSeq nucleotide sequence ID" value="NM_058237.2"/>
    <property type="RefSeq protein sequence ID" value="NP_478144.1"/>
</dbReference>
<dbReference type="UCSC" id="uc001ycr.4">
    <molecule id="Q6NUP7-1"/>
    <property type="organism name" value="human"/>
</dbReference>
<dbReference type="AGR" id="HGNC:23788"/>
<dbReference type="CTD" id="57718"/>
<dbReference type="DisGeNET" id="57718"/>
<dbReference type="GeneCards" id="PPP4R4"/>
<dbReference type="HGNC" id="HGNC:23788">
    <property type="gene designation" value="PPP4R4"/>
</dbReference>
<dbReference type="HPA" id="ENSG00000119698">
    <property type="expression patterns" value="Tissue enhanced (brain, testis)"/>
</dbReference>
<dbReference type="neXtProt" id="NX_Q6NUP7"/>
<dbReference type="OpenTargets" id="ENSG00000119698"/>
<dbReference type="PharmGKB" id="PA164724938"/>
<dbReference type="VEuPathDB" id="HostDB:ENSG00000119698"/>
<dbReference type="eggNOG" id="KOG0211">
    <property type="taxonomic scope" value="Eukaryota"/>
</dbReference>
<dbReference type="GeneTree" id="ENSGT00510000047895"/>
<dbReference type="HOGENOM" id="CLU_010601_0_0_1"/>
<dbReference type="InParanoid" id="Q6NUP7"/>
<dbReference type="OMA" id="CLIDLVE"/>
<dbReference type="OrthoDB" id="340346at2759"/>
<dbReference type="PAN-GO" id="Q6NUP7">
    <property type="GO annotations" value="5 GO annotations based on evolutionary models"/>
</dbReference>
<dbReference type="PhylomeDB" id="Q6NUP7"/>
<dbReference type="TreeFam" id="TF313717"/>
<dbReference type="PathwayCommons" id="Q6NUP7"/>
<dbReference type="SignaLink" id="Q6NUP7"/>
<dbReference type="BioGRID-ORCS" id="57718">
    <property type="hits" value="9 hits in 1143 CRISPR screens"/>
</dbReference>
<dbReference type="ChiTaRS" id="PPP4R4">
    <property type="organism name" value="human"/>
</dbReference>
<dbReference type="GenomeRNAi" id="57718"/>
<dbReference type="Pharos" id="Q6NUP7">
    <property type="development level" value="Tdark"/>
</dbReference>
<dbReference type="PRO" id="PR:Q6NUP7"/>
<dbReference type="Proteomes" id="UP000005640">
    <property type="component" value="Chromosome 14"/>
</dbReference>
<dbReference type="RNAct" id="Q6NUP7">
    <property type="molecule type" value="protein"/>
</dbReference>
<dbReference type="Bgee" id="ENSG00000119698">
    <property type="expression patterns" value="Expressed in superior frontal gyrus and 95 other cell types or tissues"/>
</dbReference>
<dbReference type="ExpressionAtlas" id="Q6NUP7">
    <property type="expression patterns" value="baseline and differential"/>
</dbReference>
<dbReference type="GO" id="GO:0036064">
    <property type="term" value="C:ciliary basal body"/>
    <property type="evidence" value="ECO:0000314"/>
    <property type="project" value="HPA"/>
</dbReference>
<dbReference type="GO" id="GO:0005929">
    <property type="term" value="C:cilium"/>
    <property type="evidence" value="ECO:0000314"/>
    <property type="project" value="HPA"/>
</dbReference>
<dbReference type="GO" id="GO:0005737">
    <property type="term" value="C:cytoplasm"/>
    <property type="evidence" value="ECO:0000314"/>
    <property type="project" value="UniProtKB"/>
</dbReference>
<dbReference type="GO" id="GO:0005829">
    <property type="term" value="C:cytosol"/>
    <property type="evidence" value="ECO:0000314"/>
    <property type="project" value="HPA"/>
</dbReference>
<dbReference type="GO" id="GO:0043231">
    <property type="term" value="C:intracellular membrane-bounded organelle"/>
    <property type="evidence" value="ECO:0000314"/>
    <property type="project" value="HPA"/>
</dbReference>
<dbReference type="GO" id="GO:0008287">
    <property type="term" value="C:protein serine/threonine phosphatase complex"/>
    <property type="evidence" value="ECO:0000314"/>
    <property type="project" value="UniProtKB"/>
</dbReference>
<dbReference type="GO" id="GO:0004864">
    <property type="term" value="F:protein phosphatase inhibitor activity"/>
    <property type="evidence" value="ECO:0000314"/>
    <property type="project" value="MGI"/>
</dbReference>
<dbReference type="GO" id="GO:0019888">
    <property type="term" value="F:protein phosphatase regulator activity"/>
    <property type="evidence" value="ECO:0000318"/>
    <property type="project" value="GO_Central"/>
</dbReference>
<dbReference type="GO" id="GO:0004865">
    <property type="term" value="F:protein serine/threonine phosphatase inhibitor activity"/>
    <property type="evidence" value="ECO:0000314"/>
    <property type="project" value="MGI"/>
</dbReference>
<dbReference type="GO" id="GO:0001835">
    <property type="term" value="P:blastocyst hatching"/>
    <property type="evidence" value="ECO:0007669"/>
    <property type="project" value="Ensembl"/>
</dbReference>
<dbReference type="FunFam" id="1.25.10.10:FF:000097">
    <property type="entry name" value="Serine/threonine-protein phosphatase 4 regulatory subunit 4"/>
    <property type="match status" value="1"/>
</dbReference>
<dbReference type="Gene3D" id="1.25.10.10">
    <property type="entry name" value="Leucine-rich Repeat Variant"/>
    <property type="match status" value="1"/>
</dbReference>
<dbReference type="InterPro" id="IPR011989">
    <property type="entry name" value="ARM-like"/>
</dbReference>
<dbReference type="InterPro" id="IPR016024">
    <property type="entry name" value="ARM-type_fold"/>
</dbReference>
<dbReference type="InterPro" id="IPR021133">
    <property type="entry name" value="HEAT_type_2"/>
</dbReference>
<dbReference type="InterPro" id="IPR039918">
    <property type="entry name" value="PPP4R4"/>
</dbReference>
<dbReference type="PANTHER" id="PTHR21467">
    <property type="entry name" value="PROTEIN PHOSPHATASE 4 REGULATORY SUBUNIT 4 PPP4R4"/>
    <property type="match status" value="1"/>
</dbReference>
<dbReference type="PANTHER" id="PTHR21467:SF0">
    <property type="entry name" value="SERINE_THREONINE-PROTEIN PHOSPHATASE 4 REGULATORY SUBUNIT 4"/>
    <property type="match status" value="1"/>
</dbReference>
<dbReference type="SUPFAM" id="SSF48371">
    <property type="entry name" value="ARM repeat"/>
    <property type="match status" value="1"/>
</dbReference>
<dbReference type="PROSITE" id="PS50077">
    <property type="entry name" value="HEAT_REPEAT"/>
    <property type="match status" value="2"/>
</dbReference>
<proteinExistence type="evidence at protein level"/>
<name>PP4R4_HUMAN</name>
<gene>
    <name type="primary">PPP4R4</name>
    <name type="synonym">KIAA1622</name>
    <name type="synonym">PP4R4</name>
</gene>
<comment type="function">
    <text>Putative regulatory subunit of serine/threonine-protein phosphatase 4.</text>
</comment>
<comment type="subunit">
    <text evidence="4">Serine/threonine-protein phosphatase 4 (PP4) occurs in different assemblies of the catalytic and one or more regulatory subunits. Component of the PP4 complex PPP4C-PPP4R4.</text>
</comment>
<comment type="interaction">
    <interactant intactId="EBI-1774189">
        <id>Q6NUP7</id>
    </interactant>
    <interactant intactId="EBI-1046072">
        <id>P60510</id>
        <label>PPP4C</label>
    </interactant>
    <organismsDiffer>false</organismsDiffer>
    <experiments>10</experiments>
</comment>
<comment type="subcellular location">
    <subcellularLocation>
        <location evidence="4">Cytoplasm</location>
    </subcellularLocation>
</comment>
<comment type="alternative products">
    <event type="alternative splicing"/>
    <isoform>
        <id>Q6NUP7-1</id>
        <name>1</name>
        <sequence type="displayed"/>
    </isoform>
    <isoform>
        <id>Q6NUP7-2</id>
        <name>2</name>
        <sequence type="described" ref="VSP_029616 VSP_029617"/>
    </isoform>
</comment>
<comment type="sequence caution" evidence="6">
    <conflict type="erroneous initiation">
        <sequence resource="EMBL-CDS" id="BAB13448"/>
    </conflict>
</comment>
<evidence type="ECO:0000250" key="1">
    <source>
        <dbReference type="UniProtKB" id="Q8C0Y0"/>
    </source>
</evidence>
<evidence type="ECO:0000255" key="2"/>
<evidence type="ECO:0000256" key="3">
    <source>
        <dbReference type="SAM" id="MobiDB-lite"/>
    </source>
</evidence>
<evidence type="ECO:0000269" key="4">
    <source>
    </source>
</evidence>
<evidence type="ECO:0000303" key="5">
    <source>
    </source>
</evidence>
<evidence type="ECO:0000305" key="6"/>